<proteinExistence type="inferred from homology"/>
<sequence length="212" mass="24305">MAVAANKRSVMTLFSGPTDIYSHQVRIVLAEKGVSFEIEHVEKDNPPQDLIDLNPNQSVPTLVDRELTLWESRIIMEYLDERFPHPPLMPVYPVARGESRLYMHRIEKDWYTLMNTIINGSASEADAARKQLREELLAIAPVFGQKPYFLSDEFSLVDCYLAPLLWRLPQLGIEFSGPGAKELKGYMTRVFERDSFLASLTEAEREMRLGRS</sequence>
<accession>P0ACA5</accession>
<accession>P05838</accession>
<name>SSPA_ECO57</name>
<dbReference type="EMBL" id="AE005174">
    <property type="protein sequence ID" value="AAG58357.1"/>
    <property type="molecule type" value="Genomic_DNA"/>
</dbReference>
<dbReference type="EMBL" id="BA000007">
    <property type="protein sequence ID" value="BAB37525.1"/>
    <property type="molecule type" value="Genomic_DNA"/>
</dbReference>
<dbReference type="PIR" id="A85987">
    <property type="entry name" value="A85987"/>
</dbReference>
<dbReference type="PIR" id="F91141">
    <property type="entry name" value="F91141"/>
</dbReference>
<dbReference type="RefSeq" id="NP_312129.1">
    <property type="nucleotide sequence ID" value="NC_002695.1"/>
</dbReference>
<dbReference type="RefSeq" id="WP_000257293.1">
    <property type="nucleotide sequence ID" value="NZ_VOAI01000014.1"/>
</dbReference>
<dbReference type="SMR" id="P0ACA5"/>
<dbReference type="STRING" id="155864.Z4587"/>
<dbReference type="GeneID" id="89518065"/>
<dbReference type="GeneID" id="916049"/>
<dbReference type="KEGG" id="ece:Z4587"/>
<dbReference type="KEGG" id="ecs:ECs_4102"/>
<dbReference type="PATRIC" id="fig|386585.9.peg.4282"/>
<dbReference type="eggNOG" id="COG0625">
    <property type="taxonomic scope" value="Bacteria"/>
</dbReference>
<dbReference type="HOGENOM" id="CLU_011226_9_3_6"/>
<dbReference type="OMA" id="ADHYSHR"/>
<dbReference type="Proteomes" id="UP000000558">
    <property type="component" value="Chromosome"/>
</dbReference>
<dbReference type="Proteomes" id="UP000002519">
    <property type="component" value="Chromosome"/>
</dbReference>
<dbReference type="GO" id="GO:0005737">
    <property type="term" value="C:cytoplasm"/>
    <property type="evidence" value="ECO:0007669"/>
    <property type="project" value="TreeGrafter"/>
</dbReference>
<dbReference type="CDD" id="cd03186">
    <property type="entry name" value="GST_C_SspA"/>
    <property type="match status" value="1"/>
</dbReference>
<dbReference type="CDD" id="cd03059">
    <property type="entry name" value="GST_N_SspA"/>
    <property type="match status" value="1"/>
</dbReference>
<dbReference type="FunFam" id="1.20.1050.10:FF:000002">
    <property type="entry name" value="Stringent starvation protein A"/>
    <property type="match status" value="1"/>
</dbReference>
<dbReference type="Gene3D" id="1.20.1050.10">
    <property type="match status" value="1"/>
</dbReference>
<dbReference type="Gene3D" id="3.40.30.10">
    <property type="entry name" value="Glutaredoxin"/>
    <property type="match status" value="1"/>
</dbReference>
<dbReference type="InterPro" id="IPR010987">
    <property type="entry name" value="Glutathione-S-Trfase_C-like"/>
</dbReference>
<dbReference type="InterPro" id="IPR036282">
    <property type="entry name" value="Glutathione-S-Trfase_C_sf"/>
</dbReference>
<dbReference type="InterPro" id="IPR040079">
    <property type="entry name" value="Glutathione_S-Trfase"/>
</dbReference>
<dbReference type="InterPro" id="IPR004045">
    <property type="entry name" value="Glutathione_S-Trfase_N"/>
</dbReference>
<dbReference type="InterPro" id="IPR004046">
    <property type="entry name" value="GST_C"/>
</dbReference>
<dbReference type="InterPro" id="IPR050983">
    <property type="entry name" value="GST_Omega/HSP26"/>
</dbReference>
<dbReference type="InterPro" id="IPR034342">
    <property type="entry name" value="SspA_C"/>
</dbReference>
<dbReference type="InterPro" id="IPR034341">
    <property type="entry name" value="SspA_N"/>
</dbReference>
<dbReference type="InterPro" id="IPR036249">
    <property type="entry name" value="Thioredoxin-like_sf"/>
</dbReference>
<dbReference type="NCBIfam" id="NF007016">
    <property type="entry name" value="PRK09481.1"/>
    <property type="match status" value="1"/>
</dbReference>
<dbReference type="PANTHER" id="PTHR43968">
    <property type="match status" value="1"/>
</dbReference>
<dbReference type="PANTHER" id="PTHR43968:SF6">
    <property type="entry name" value="GLUTATHIONE S-TRANSFERASE OMEGA"/>
    <property type="match status" value="1"/>
</dbReference>
<dbReference type="Pfam" id="PF00043">
    <property type="entry name" value="GST_C"/>
    <property type="match status" value="1"/>
</dbReference>
<dbReference type="Pfam" id="PF02798">
    <property type="entry name" value="GST_N"/>
    <property type="match status" value="1"/>
</dbReference>
<dbReference type="SFLD" id="SFLDS00019">
    <property type="entry name" value="Glutathione_Transferase_(cytos"/>
    <property type="match status" value="1"/>
</dbReference>
<dbReference type="SFLD" id="SFLDG00358">
    <property type="entry name" value="Main_(cytGST)"/>
    <property type="match status" value="1"/>
</dbReference>
<dbReference type="SUPFAM" id="SSF47616">
    <property type="entry name" value="GST C-terminal domain-like"/>
    <property type="match status" value="1"/>
</dbReference>
<dbReference type="SUPFAM" id="SSF52833">
    <property type="entry name" value="Thioredoxin-like"/>
    <property type="match status" value="1"/>
</dbReference>
<dbReference type="PROSITE" id="PS50405">
    <property type="entry name" value="GST_CTER"/>
    <property type="match status" value="1"/>
</dbReference>
<dbReference type="PROSITE" id="PS50404">
    <property type="entry name" value="GST_NTER"/>
    <property type="match status" value="1"/>
</dbReference>
<comment type="function">
    <text evidence="1">Forms an equimolar complex with the RNA polymerase holoenzyme (RNAP) but not with the core enzyme.</text>
</comment>
<comment type="similarity">
    <text evidence="2">Belongs to the GST superfamily. HSP26 family.</text>
</comment>
<feature type="initiator methionine" description="Removed" evidence="1">
    <location>
        <position position="1"/>
    </location>
</feature>
<feature type="chain" id="PRO_0000185877" description="Stringent starvation protein A">
    <location>
        <begin position="2"/>
        <end position="212"/>
    </location>
</feature>
<feature type="domain" description="GST N-terminal">
    <location>
        <begin position="9"/>
        <end position="87"/>
    </location>
</feature>
<feature type="domain" description="GST C-terminal">
    <location>
        <begin position="92"/>
        <end position="209"/>
    </location>
</feature>
<protein>
    <recommendedName>
        <fullName>Stringent starvation protein A</fullName>
    </recommendedName>
</protein>
<evidence type="ECO:0000250" key="1"/>
<evidence type="ECO:0000305" key="2"/>
<gene>
    <name type="primary">sspA</name>
    <name type="ordered locus">Z4587</name>
    <name type="ordered locus">ECs4102</name>
</gene>
<keyword id="KW-1185">Reference proteome</keyword>
<reference key="1">
    <citation type="journal article" date="2001" name="Nature">
        <title>Genome sequence of enterohaemorrhagic Escherichia coli O157:H7.</title>
        <authorList>
            <person name="Perna N.T."/>
            <person name="Plunkett G. III"/>
            <person name="Burland V."/>
            <person name="Mau B."/>
            <person name="Glasner J.D."/>
            <person name="Rose D.J."/>
            <person name="Mayhew G.F."/>
            <person name="Evans P.S."/>
            <person name="Gregor J."/>
            <person name="Kirkpatrick H.A."/>
            <person name="Posfai G."/>
            <person name="Hackett J."/>
            <person name="Klink S."/>
            <person name="Boutin A."/>
            <person name="Shao Y."/>
            <person name="Miller L."/>
            <person name="Grotbeck E.J."/>
            <person name="Davis N.W."/>
            <person name="Lim A."/>
            <person name="Dimalanta E.T."/>
            <person name="Potamousis K."/>
            <person name="Apodaca J."/>
            <person name="Anantharaman T.S."/>
            <person name="Lin J."/>
            <person name="Yen G."/>
            <person name="Schwartz D.C."/>
            <person name="Welch R.A."/>
            <person name="Blattner F.R."/>
        </authorList>
    </citation>
    <scope>NUCLEOTIDE SEQUENCE [LARGE SCALE GENOMIC DNA]</scope>
    <source>
        <strain>O157:H7 / EDL933 / ATCC 700927 / EHEC</strain>
    </source>
</reference>
<reference key="2">
    <citation type="journal article" date="2001" name="DNA Res.">
        <title>Complete genome sequence of enterohemorrhagic Escherichia coli O157:H7 and genomic comparison with a laboratory strain K-12.</title>
        <authorList>
            <person name="Hayashi T."/>
            <person name="Makino K."/>
            <person name="Ohnishi M."/>
            <person name="Kurokawa K."/>
            <person name="Ishii K."/>
            <person name="Yokoyama K."/>
            <person name="Han C.-G."/>
            <person name="Ohtsubo E."/>
            <person name="Nakayama K."/>
            <person name="Murata T."/>
            <person name="Tanaka M."/>
            <person name="Tobe T."/>
            <person name="Iida T."/>
            <person name="Takami H."/>
            <person name="Honda T."/>
            <person name="Sasakawa C."/>
            <person name="Ogasawara N."/>
            <person name="Yasunaga T."/>
            <person name="Kuhara S."/>
            <person name="Shiba T."/>
            <person name="Hattori M."/>
            <person name="Shinagawa H."/>
        </authorList>
    </citation>
    <scope>NUCLEOTIDE SEQUENCE [LARGE SCALE GENOMIC DNA]</scope>
    <source>
        <strain>O157:H7 / Sakai / RIMD 0509952 / EHEC</strain>
    </source>
</reference>
<organism>
    <name type="scientific">Escherichia coli O157:H7</name>
    <dbReference type="NCBI Taxonomy" id="83334"/>
    <lineage>
        <taxon>Bacteria</taxon>
        <taxon>Pseudomonadati</taxon>
        <taxon>Pseudomonadota</taxon>
        <taxon>Gammaproteobacteria</taxon>
        <taxon>Enterobacterales</taxon>
        <taxon>Enterobacteriaceae</taxon>
        <taxon>Escherichia</taxon>
    </lineage>
</organism>